<gene>
    <name type="primary">cas21</name>
    <name type="ordered locus">AF_1876</name>
</gene>
<feature type="chain" id="PRO_0000416948" description="CRISPR-associated endoribonuclease Cas2 1">
    <location>
        <begin position="1"/>
        <end position="94"/>
    </location>
</feature>
<feature type="binding site" evidence="2">
    <location>
        <position position="8"/>
    </location>
    <ligand>
        <name>Mg(2+)</name>
        <dbReference type="ChEBI" id="CHEBI:18420"/>
        <note>catalytic</note>
    </ligand>
</feature>
<organism>
    <name type="scientific">Archaeoglobus fulgidus (strain ATCC 49558 / DSM 4304 / JCM 9628 / NBRC 100126 / VC-16)</name>
    <dbReference type="NCBI Taxonomy" id="224325"/>
    <lineage>
        <taxon>Archaea</taxon>
        <taxon>Methanobacteriati</taxon>
        <taxon>Methanobacteriota</taxon>
        <taxon>Archaeoglobi</taxon>
        <taxon>Archaeoglobales</taxon>
        <taxon>Archaeoglobaceae</taxon>
        <taxon>Archaeoglobus</taxon>
    </lineage>
</organism>
<accession>O28403</accession>
<evidence type="ECO:0000250" key="1"/>
<evidence type="ECO:0000255" key="2"/>
<evidence type="ECO:0000269" key="3">
    <source>
    </source>
</evidence>
<evidence type="ECO:0000305" key="4"/>
<reference key="1">
    <citation type="journal article" date="1997" name="Nature">
        <title>The complete genome sequence of the hyperthermophilic, sulphate-reducing archaeon Archaeoglobus fulgidus.</title>
        <authorList>
            <person name="Klenk H.-P."/>
            <person name="Clayton R.A."/>
            <person name="Tomb J.-F."/>
            <person name="White O."/>
            <person name="Nelson K.E."/>
            <person name="Ketchum K.A."/>
            <person name="Dodson R.J."/>
            <person name="Gwinn M.L."/>
            <person name="Hickey E.K."/>
            <person name="Peterson J.D."/>
            <person name="Richardson D.L."/>
            <person name="Kerlavage A.R."/>
            <person name="Graham D.E."/>
            <person name="Kyrpides N.C."/>
            <person name="Fleischmann R.D."/>
            <person name="Quackenbush J."/>
            <person name="Lee N.H."/>
            <person name="Sutton G.G."/>
            <person name="Gill S.R."/>
            <person name="Kirkness E.F."/>
            <person name="Dougherty B.A."/>
            <person name="McKenney K."/>
            <person name="Adams M.D."/>
            <person name="Loftus B.J."/>
            <person name="Peterson S.N."/>
            <person name="Reich C.I."/>
            <person name="McNeil L.K."/>
            <person name="Badger J.H."/>
            <person name="Glodek A."/>
            <person name="Zhou L."/>
            <person name="Overbeek R."/>
            <person name="Gocayne J.D."/>
            <person name="Weidman J.F."/>
            <person name="McDonald L.A."/>
            <person name="Utterback T.R."/>
            <person name="Cotton M.D."/>
            <person name="Spriggs T."/>
            <person name="Artiach P."/>
            <person name="Kaine B.P."/>
            <person name="Sykes S.M."/>
            <person name="Sadow P.W."/>
            <person name="D'Andrea K.P."/>
            <person name="Bowman C."/>
            <person name="Fujii C."/>
            <person name="Garland S.A."/>
            <person name="Mason T.M."/>
            <person name="Olsen G.J."/>
            <person name="Fraser C.M."/>
            <person name="Smith H.O."/>
            <person name="Woese C.R."/>
            <person name="Venter J.C."/>
        </authorList>
    </citation>
    <scope>NUCLEOTIDE SEQUENCE [LARGE SCALE GENOMIC DNA]</scope>
    <source>
        <strain>ATCC 49558 / DSM 4304 / JCM 9628 / NBRC 100126 / VC-16</strain>
    </source>
</reference>
<reference key="2">
    <citation type="journal article" date="2008" name="J. Biol. Chem.">
        <title>A novel family of sequence-specific endoribonucleases associated with the clustered regularly interspaced short palindromic repeats.</title>
        <authorList>
            <person name="Beloglazova N."/>
            <person name="Brown G."/>
            <person name="Zimmerman M.D."/>
            <person name="Proudfoot M."/>
            <person name="Makarova K.S."/>
            <person name="Kudritska M."/>
            <person name="Kochinyan S."/>
            <person name="Wang S."/>
            <person name="Chruszcz M."/>
            <person name="Minor W."/>
            <person name="Koonin E.V."/>
            <person name="Edwards A.M."/>
            <person name="Savchenko A."/>
            <person name="Yakunin A.F."/>
        </authorList>
    </citation>
    <scope>FUNCTION AS A SSRNA-SPECIFIC ENDORIBONUCLEASE</scope>
    <source>
        <strain>ATCC 49558 / DSM 4304 / JCM 9628 / NBRC 100126 / VC-16</strain>
    </source>
</reference>
<sequence>MLHLVVYDISDDGSRARLAKLLEKFGLQRVQYSAFRGELNPNDREVLARQVGKFVRDDRDCIFIIPLCQRCSSTAIVISNTGVELVKEKGVEFV</sequence>
<name>CAS2A_ARCFU</name>
<proteinExistence type="evidence at protein level"/>
<comment type="function">
    <text evidence="1 3">CRISPR (clustered regularly interspaced short palindromic repeat), is an adaptive immune system that provides protection against mobile genetic elements (viruses, transposable elements and conjugative plasmids). CRISPR clusters contain sequences complementary to antecedent mobile elements and target invading nucleic acids. CRISPR clusters are transcribed and processed into CRISPR RNA (crRNA). Involved in the integration of spacer DNA into the CRISPR cassette (By similarity). Functions as a ssRNA-specific endoribonuclease.</text>
</comment>
<comment type="cofactor">
    <cofactor evidence="1">
        <name>Mg(2+)</name>
        <dbReference type="ChEBI" id="CHEBI:18420"/>
    </cofactor>
</comment>
<comment type="subunit">
    <text evidence="1">Homodimer, forms a heterotetramer with a Cas1 homodimer.</text>
</comment>
<comment type="similarity">
    <text evidence="4">Belongs to the CRISPR-associated endoribonuclease Cas2 protein family.</text>
</comment>
<keyword id="KW-0051">Antiviral defense</keyword>
<keyword id="KW-0255">Endonuclease</keyword>
<keyword id="KW-0378">Hydrolase</keyword>
<keyword id="KW-0460">Magnesium</keyword>
<keyword id="KW-0479">Metal-binding</keyword>
<keyword id="KW-0540">Nuclease</keyword>
<keyword id="KW-1185">Reference proteome</keyword>
<dbReference type="EC" id="3.1.-.-"/>
<dbReference type="EMBL" id="AE000782">
    <property type="protein sequence ID" value="AAB89376.1"/>
    <property type="molecule type" value="Genomic_DNA"/>
</dbReference>
<dbReference type="PIR" id="C69484">
    <property type="entry name" value="C69484"/>
</dbReference>
<dbReference type="SMR" id="O28403"/>
<dbReference type="STRING" id="224325.AF_1876"/>
<dbReference type="PaxDb" id="224325-AF_1876"/>
<dbReference type="DNASU" id="1485097"/>
<dbReference type="EnsemblBacteria" id="AAB89376">
    <property type="protein sequence ID" value="AAB89376"/>
    <property type="gene ID" value="AF_1876"/>
</dbReference>
<dbReference type="KEGG" id="afu:AF_1876"/>
<dbReference type="eggNOG" id="arCOG04194">
    <property type="taxonomic scope" value="Archaea"/>
</dbReference>
<dbReference type="HOGENOM" id="CLU_161124_2_0_2"/>
<dbReference type="OrthoDB" id="75992at2157"/>
<dbReference type="PhylomeDB" id="O28403"/>
<dbReference type="Proteomes" id="UP000002199">
    <property type="component" value="Chromosome"/>
</dbReference>
<dbReference type="GO" id="GO:0046872">
    <property type="term" value="F:metal ion binding"/>
    <property type="evidence" value="ECO:0007669"/>
    <property type="project" value="UniProtKB-UniRule"/>
</dbReference>
<dbReference type="GO" id="GO:0004521">
    <property type="term" value="F:RNA endonuclease activity"/>
    <property type="evidence" value="ECO:0007669"/>
    <property type="project" value="InterPro"/>
</dbReference>
<dbReference type="GO" id="GO:0051607">
    <property type="term" value="P:defense response to virus"/>
    <property type="evidence" value="ECO:0007669"/>
    <property type="project" value="UniProtKB-UniRule"/>
</dbReference>
<dbReference type="GO" id="GO:0043571">
    <property type="term" value="P:maintenance of CRISPR repeat elements"/>
    <property type="evidence" value="ECO:0007669"/>
    <property type="project" value="UniProtKB-UniRule"/>
</dbReference>
<dbReference type="CDD" id="cd09638">
    <property type="entry name" value="Cas2_I_II_III"/>
    <property type="match status" value="1"/>
</dbReference>
<dbReference type="Gene3D" id="3.30.70.240">
    <property type="match status" value="1"/>
</dbReference>
<dbReference type="HAMAP" id="MF_01471">
    <property type="entry name" value="Cas2"/>
    <property type="match status" value="1"/>
</dbReference>
<dbReference type="InterPro" id="IPR021127">
    <property type="entry name" value="CRISPR_associated_Cas2"/>
</dbReference>
<dbReference type="InterPro" id="IPR019199">
    <property type="entry name" value="Virulence_VapD/CRISPR_Cas2"/>
</dbReference>
<dbReference type="NCBIfam" id="TIGR01573">
    <property type="entry name" value="cas2"/>
    <property type="match status" value="1"/>
</dbReference>
<dbReference type="PANTHER" id="PTHR34405">
    <property type="entry name" value="CRISPR-ASSOCIATED ENDORIBONUCLEASE CAS2"/>
    <property type="match status" value="1"/>
</dbReference>
<dbReference type="PANTHER" id="PTHR34405:SF3">
    <property type="entry name" value="CRISPR-ASSOCIATED ENDORIBONUCLEASE CAS2 3"/>
    <property type="match status" value="1"/>
</dbReference>
<dbReference type="Pfam" id="PF09827">
    <property type="entry name" value="CRISPR_Cas2"/>
    <property type="match status" value="1"/>
</dbReference>
<dbReference type="SUPFAM" id="SSF143430">
    <property type="entry name" value="TTP0101/SSO1404-like"/>
    <property type="match status" value="1"/>
</dbReference>
<protein>
    <recommendedName>
        <fullName>CRISPR-associated endoribonuclease Cas2 1</fullName>
        <ecNumber>3.1.-.-</ecNumber>
    </recommendedName>
</protein>